<protein>
    <recommendedName>
        <fullName>Uncharacterized protein 7.5K</fullName>
    </recommendedName>
    <alternativeName>
        <fullName>Uncharacterized protein of 7.5 kDa</fullName>
    </alternativeName>
</protein>
<feature type="chain" id="PRO_0000428716" description="Uncharacterized protein 7.5K">
    <location>
        <begin position="1"/>
        <end position="74"/>
    </location>
</feature>
<feature type="region of interest" description="Disordered" evidence="1">
    <location>
        <begin position="39"/>
        <end position="74"/>
    </location>
</feature>
<keyword id="KW-1185">Reference proteome</keyword>
<organismHost>
    <name type="scientific">Homo sapiens</name>
    <name type="common">Human</name>
    <dbReference type="NCBI Taxonomy" id="9606"/>
</organismHost>
<dbReference type="EMBL" id="AF162273">
    <property type="status" value="NOT_ANNOTATED_CDS"/>
    <property type="molecule type" value="Genomic_DNA"/>
</dbReference>
<dbReference type="Proteomes" id="UP000006624">
    <property type="component" value="Segment"/>
</dbReference>
<accession>P0DJY9</accession>
<sequence>MQMPSTQTSKPPQLSQTPVSAAVVVKALKNSVKAAFLTSSPQAPGTLKPRALVRPSPGPVQENHLSEAQFPPKL</sequence>
<name>75K_PAVHV</name>
<organism>
    <name type="scientific">Human parvovirus B19 (strain HV)</name>
    <name type="common">HPV B19</name>
    <dbReference type="NCBI Taxonomy" id="648237"/>
    <lineage>
        <taxon>Viruses</taxon>
        <taxon>Monodnaviria</taxon>
        <taxon>Shotokuvirae</taxon>
        <taxon>Cossaviricota</taxon>
        <taxon>Quintoviricetes</taxon>
        <taxon>Piccovirales</taxon>
        <taxon>Parvoviridae</taxon>
        <taxon>Parvovirinae</taxon>
        <taxon>Erythroparvovirus</taxon>
        <taxon>Erythroparvovirus primate1</taxon>
    </lineage>
</organism>
<reference key="1">
    <citation type="submission" date="1999-06" db="EMBL/GenBank/DDBJ databases">
        <title>B19 genome sequence and structure analysis.</title>
        <authorList>
            <person name="Gallinella G."/>
            <person name="Venturoli S."/>
        </authorList>
    </citation>
    <scope>NUCLEOTIDE SEQUENCE [GENOMIC DNA]</scope>
</reference>
<proteinExistence type="predicted"/>
<gene>
    <name type="primary">7.5K</name>
</gene>
<evidence type="ECO:0000256" key="1">
    <source>
        <dbReference type="SAM" id="MobiDB-lite"/>
    </source>
</evidence>